<sequence>QLANEPPIEIIRQESTDNGDGNFNFLFETANGIYKEVSGYPTANGAQAMTGSFRFPLDDGQIVEVSFTADENGYLPVSDFIPTPHPIPAHVLETLAIVDELVRQGATWDEQGRRIT</sequence>
<name>CUPA5_CANPG</name>
<evidence type="ECO:0000255" key="1">
    <source>
        <dbReference type="PROSITE-ProRule" id="PRU00497"/>
    </source>
</evidence>
<evidence type="ECO:0000256" key="2">
    <source>
        <dbReference type="SAM" id="MobiDB-lite"/>
    </source>
</evidence>
<evidence type="ECO:0000269" key="3">
    <source>
    </source>
</evidence>
<proteinExistence type="evidence at protein level"/>
<keyword id="KW-0193">Cuticle</keyword>
<keyword id="KW-0903">Direct protein sequencing</keyword>
<keyword id="KW-0325">Glycoprotein</keyword>
<keyword id="KW-0873">Pyrrolidone carboxylic acid</keyword>
<protein>
    <recommendedName>
        <fullName>Cuticle protein AM1274</fullName>
        <shortName>CPAM1274</shortName>
    </recommendedName>
</protein>
<organism>
    <name type="scientific">Cancer pagurus</name>
    <name type="common">Rock crab</name>
    <dbReference type="NCBI Taxonomy" id="6755"/>
    <lineage>
        <taxon>Eukaryota</taxon>
        <taxon>Metazoa</taxon>
        <taxon>Ecdysozoa</taxon>
        <taxon>Arthropoda</taxon>
        <taxon>Crustacea</taxon>
        <taxon>Multicrustacea</taxon>
        <taxon>Malacostraca</taxon>
        <taxon>Eumalacostraca</taxon>
        <taxon>Eucarida</taxon>
        <taxon>Decapoda</taxon>
        <taxon>Pleocyemata</taxon>
        <taxon>Brachyura</taxon>
        <taxon>Eubrachyura</taxon>
        <taxon>Cancroidea</taxon>
        <taxon>Cancridae</taxon>
        <taxon>Cancer</taxon>
    </lineage>
</organism>
<dbReference type="GO" id="GO:0062129">
    <property type="term" value="C:chitin-based extracellular matrix"/>
    <property type="evidence" value="ECO:0007669"/>
    <property type="project" value="TreeGrafter"/>
</dbReference>
<dbReference type="GO" id="GO:0008010">
    <property type="term" value="F:structural constituent of chitin-based larval cuticle"/>
    <property type="evidence" value="ECO:0007669"/>
    <property type="project" value="TreeGrafter"/>
</dbReference>
<dbReference type="InterPro" id="IPR031311">
    <property type="entry name" value="CHIT_BIND_RR_consensus"/>
</dbReference>
<dbReference type="InterPro" id="IPR050468">
    <property type="entry name" value="Cuticle_Struct_Prot"/>
</dbReference>
<dbReference type="InterPro" id="IPR000618">
    <property type="entry name" value="Insect_cuticle"/>
</dbReference>
<dbReference type="PANTHER" id="PTHR10380">
    <property type="entry name" value="CUTICLE PROTEIN"/>
    <property type="match status" value="1"/>
</dbReference>
<dbReference type="PANTHER" id="PTHR10380:SF173">
    <property type="entry name" value="CUTICULAR PROTEIN 47EF, ISOFORM C-RELATED"/>
    <property type="match status" value="1"/>
</dbReference>
<dbReference type="Pfam" id="PF00379">
    <property type="entry name" value="Chitin_bind_4"/>
    <property type="match status" value="1"/>
</dbReference>
<dbReference type="PRINTS" id="PR00947">
    <property type="entry name" value="CUTICLE"/>
</dbReference>
<dbReference type="PROSITE" id="PS00233">
    <property type="entry name" value="CHIT_BIND_RR_1"/>
    <property type="match status" value="1"/>
</dbReference>
<dbReference type="PROSITE" id="PS51155">
    <property type="entry name" value="CHIT_BIND_RR_2"/>
    <property type="match status" value="1"/>
</dbReference>
<feature type="chain" id="PRO_0000196160" description="Cuticle protein AM1274">
    <location>
        <begin position="1"/>
        <end position="116"/>
    </location>
</feature>
<feature type="domain" description="Chitin-binding type R&amp;R" evidence="1">
    <location>
        <begin position="20"/>
        <end position="85"/>
    </location>
</feature>
<feature type="region of interest" description="Disordered" evidence="2">
    <location>
        <begin position="1"/>
        <end position="22"/>
    </location>
</feature>
<feature type="modified residue" description="Pyrrolidone carboxylic acid" evidence="3">
    <location>
        <position position="1"/>
    </location>
</feature>
<feature type="glycosylation site" description="O-linked (HexNAc) threonine">
    <location>
        <position position="83"/>
    </location>
</feature>
<comment type="tissue specificity">
    <text>Arthrodial membrane.</text>
</comment>
<comment type="mass spectrometry"/>
<accession>P81579</accession>
<reference key="1">
    <citation type="journal article" date="1999" name="Comp. Biochem. Physiol.">
        <title>Exoskeletal proteins from the crab, Cancer pagurus.</title>
        <authorList>
            <person name="Andersen S.O."/>
        </authorList>
    </citation>
    <scope>PROTEIN SEQUENCE</scope>
    <scope>PYROGLUTAMATE FORMATION AT GLN-1</scope>
    <scope>MASS SPECTROMETRY</scope>
    <source>
        <tissue>Carapace cuticle</tissue>
    </source>
</reference>